<gene>
    <name type="primary">Procr</name>
</gene>
<evidence type="ECO:0000250" key="1"/>
<evidence type="ECO:0000255" key="2"/>
<comment type="function">
    <text evidence="1">Binds activated protein C. Enhances protein C activation by the thrombin-thrombomodulin complex; plays a role in the protein C pathway controlling blood coagulation (By similarity).</text>
</comment>
<comment type="subcellular location">
    <subcellularLocation>
        <location evidence="1">Membrane</location>
        <topology evidence="1">Single-pass type I membrane protein</topology>
    </subcellularLocation>
</comment>
<organism>
    <name type="scientific">Rattus norvegicus</name>
    <name type="common">Rat</name>
    <dbReference type="NCBI Taxonomy" id="10116"/>
    <lineage>
        <taxon>Eukaryota</taxon>
        <taxon>Metazoa</taxon>
        <taxon>Chordata</taxon>
        <taxon>Craniata</taxon>
        <taxon>Vertebrata</taxon>
        <taxon>Euteleostomi</taxon>
        <taxon>Mammalia</taxon>
        <taxon>Eutheria</taxon>
        <taxon>Euarchontoglires</taxon>
        <taxon>Glires</taxon>
        <taxon>Rodentia</taxon>
        <taxon>Myomorpha</taxon>
        <taxon>Muroidea</taxon>
        <taxon>Muridae</taxon>
        <taxon>Murinae</taxon>
        <taxon>Rattus</taxon>
    </lineage>
</organism>
<keyword id="KW-0094">Blood coagulation</keyword>
<keyword id="KW-0325">Glycoprotein</keyword>
<keyword id="KW-0356">Hemostasis</keyword>
<keyword id="KW-0472">Membrane</keyword>
<keyword id="KW-0675">Receptor</keyword>
<keyword id="KW-1185">Reference proteome</keyword>
<keyword id="KW-0732">Signal</keyword>
<keyword id="KW-0812">Transmembrane</keyword>
<keyword id="KW-1133">Transmembrane helix</keyword>
<dbReference type="EMBL" id="BC097380">
    <property type="protein sequence ID" value="AAH97380.1"/>
    <property type="molecule type" value="mRNA"/>
</dbReference>
<dbReference type="EMBL" id="BC099115">
    <property type="protein sequence ID" value="AAH99115.1"/>
    <property type="molecule type" value="mRNA"/>
</dbReference>
<dbReference type="RefSeq" id="NP_001020904.1">
    <property type="nucleotide sequence ID" value="NM_001025733.2"/>
</dbReference>
<dbReference type="SMR" id="Q4V8I1"/>
<dbReference type="FunCoup" id="Q4V8I1">
    <property type="interactions" value="137"/>
</dbReference>
<dbReference type="STRING" id="10116.ENSRNOP00000052129"/>
<dbReference type="GlyCosmos" id="Q4V8I1">
    <property type="glycosylation" value="5 sites, No reported glycans"/>
</dbReference>
<dbReference type="GlyGen" id="Q4V8I1">
    <property type="glycosylation" value="5 sites"/>
</dbReference>
<dbReference type="PhosphoSitePlus" id="Q4V8I1"/>
<dbReference type="PaxDb" id="10116-ENSRNOP00000052129"/>
<dbReference type="Ensembl" id="ENSRNOT00000055254.5">
    <property type="protein sequence ID" value="ENSRNOP00000052129.3"/>
    <property type="gene ID" value="ENSRNOG00000019330.8"/>
</dbReference>
<dbReference type="GeneID" id="362248"/>
<dbReference type="KEGG" id="rno:362248"/>
<dbReference type="UCSC" id="RGD:1305991">
    <property type="organism name" value="rat"/>
</dbReference>
<dbReference type="AGR" id="RGD:1305991"/>
<dbReference type="CTD" id="10544"/>
<dbReference type="RGD" id="1305991">
    <property type="gene designation" value="Procr"/>
</dbReference>
<dbReference type="eggNOG" id="ENOG502S3SK">
    <property type="taxonomic scope" value="Eukaryota"/>
</dbReference>
<dbReference type="GeneTree" id="ENSGT00390000001159"/>
<dbReference type="HOGENOM" id="CLU_1151498_0_0_1"/>
<dbReference type="InParanoid" id="Q4V8I1"/>
<dbReference type="OMA" id="WGNASLD"/>
<dbReference type="OrthoDB" id="86295at9989"/>
<dbReference type="PhylomeDB" id="Q4V8I1"/>
<dbReference type="Reactome" id="R-RNO-140875">
    <property type="pathway name" value="Common Pathway of Fibrin Clot Formation"/>
</dbReference>
<dbReference type="Reactome" id="R-RNO-202733">
    <property type="pathway name" value="Cell surface interactions at the vascular wall"/>
</dbReference>
<dbReference type="PRO" id="PR:Q4V8I1"/>
<dbReference type="Proteomes" id="UP000002494">
    <property type="component" value="Chromosome 3"/>
</dbReference>
<dbReference type="Bgee" id="ENSRNOG00000019330">
    <property type="expression patterns" value="Expressed in ovary and 19 other cell types or tissues"/>
</dbReference>
<dbReference type="GO" id="GO:0005813">
    <property type="term" value="C:centrosome"/>
    <property type="evidence" value="ECO:0000266"/>
    <property type="project" value="RGD"/>
</dbReference>
<dbReference type="GO" id="GO:0005615">
    <property type="term" value="C:extracellular space"/>
    <property type="evidence" value="ECO:0000314"/>
    <property type="project" value="RGD"/>
</dbReference>
<dbReference type="GO" id="GO:0016020">
    <property type="term" value="C:membrane"/>
    <property type="evidence" value="ECO:0007669"/>
    <property type="project" value="UniProtKB-SubCell"/>
</dbReference>
<dbReference type="GO" id="GO:0048471">
    <property type="term" value="C:perinuclear region of cytoplasm"/>
    <property type="evidence" value="ECO:0000314"/>
    <property type="project" value="RGD"/>
</dbReference>
<dbReference type="GO" id="GO:0038023">
    <property type="term" value="F:signaling receptor activity"/>
    <property type="evidence" value="ECO:0007669"/>
    <property type="project" value="InterPro"/>
</dbReference>
<dbReference type="GO" id="GO:0007596">
    <property type="term" value="P:blood coagulation"/>
    <property type="evidence" value="ECO:0007669"/>
    <property type="project" value="UniProtKB-KW"/>
</dbReference>
<dbReference type="GO" id="GO:0050819">
    <property type="term" value="P:negative regulation of coagulation"/>
    <property type="evidence" value="ECO:0000266"/>
    <property type="project" value="RGD"/>
</dbReference>
<dbReference type="FunFam" id="3.30.500.10:FF:000008">
    <property type="entry name" value="Endothelial protein C receptor"/>
    <property type="match status" value="1"/>
</dbReference>
<dbReference type="Gene3D" id="3.30.500.10">
    <property type="entry name" value="MHC class I-like antigen recognition-like"/>
    <property type="match status" value="1"/>
</dbReference>
<dbReference type="InterPro" id="IPR015669">
    <property type="entry name" value="Endothetial_C_recpt"/>
</dbReference>
<dbReference type="InterPro" id="IPR011161">
    <property type="entry name" value="MHC_I-like_Ag-recog"/>
</dbReference>
<dbReference type="InterPro" id="IPR037055">
    <property type="entry name" value="MHC_I-like_Ag-recog_sf"/>
</dbReference>
<dbReference type="InterPro" id="IPR011162">
    <property type="entry name" value="MHC_I/II-like_Ag-recog"/>
</dbReference>
<dbReference type="PANTHER" id="PTHR15349">
    <property type="entry name" value="ENDOTHELIAL PROTEIN C RECEPTOR"/>
    <property type="match status" value="1"/>
</dbReference>
<dbReference type="PANTHER" id="PTHR15349:SF0">
    <property type="entry name" value="ENDOTHELIAL PROTEIN C RECEPTOR"/>
    <property type="match status" value="1"/>
</dbReference>
<dbReference type="Pfam" id="PF16497">
    <property type="entry name" value="MHC_I_3"/>
    <property type="match status" value="1"/>
</dbReference>
<dbReference type="SUPFAM" id="SSF54452">
    <property type="entry name" value="MHC antigen-recognition domain"/>
    <property type="match status" value="1"/>
</dbReference>
<name>EPCR_RAT</name>
<reference key="1">
    <citation type="journal article" date="2004" name="Genome Res.">
        <title>The status, quality, and expansion of the NIH full-length cDNA project: the Mammalian Gene Collection (MGC).</title>
        <authorList>
            <consortium name="The MGC Project Team"/>
        </authorList>
    </citation>
    <scope>NUCLEOTIDE SEQUENCE [LARGE SCALE MRNA]</scope>
    <source>
        <tissue>Placenta</tissue>
    </source>
</reference>
<accession>Q4V8I1</accession>
<feature type="signal peptide" evidence="2">
    <location>
        <begin position="1"/>
        <end position="20"/>
    </location>
</feature>
<feature type="chain" id="PRO_0000021193" description="Endothelial protein C receptor">
    <location>
        <begin position="21"/>
        <end position="241"/>
    </location>
</feature>
<feature type="topological domain" description="Extracellular" evidence="2">
    <location>
        <begin position="21"/>
        <end position="213"/>
    </location>
</feature>
<feature type="transmembrane region" description="Helical" evidence="2">
    <location>
        <begin position="214"/>
        <end position="234"/>
    </location>
</feature>
<feature type="topological domain" description="Cytoplasmic" evidence="2">
    <location>
        <begin position="235"/>
        <end position="241"/>
    </location>
</feature>
<feature type="glycosylation site" description="N-linked (GlcNAc...) asparagine" evidence="2">
    <location>
        <position position="47"/>
    </location>
</feature>
<feature type="glycosylation site" description="N-linked (GlcNAc...) asparagine" evidence="2">
    <location>
        <position position="64"/>
    </location>
</feature>
<feature type="glycosylation site" description="N-linked (GlcNAc...) asparagine" evidence="2">
    <location>
        <position position="139"/>
    </location>
</feature>
<feature type="glycosylation site" description="N-linked (GlcNAc...) asparagine" evidence="2">
    <location>
        <position position="165"/>
    </location>
</feature>
<feature type="glycosylation site" description="N-linked (GlcNAc...) asparagine" evidence="2">
    <location>
        <position position="175"/>
    </location>
</feature>
<sequence>MLTKFLSLLLLLLLLGCAFCNSDGSQSLHMLQISYFPDPYHGRHQGNASLGKLLTHTLEGPSNNVTILQLQDWQDPDSWARTESGLKIYLSQFNSLVQLIYRERKNDVVFPLTVSCSVGCELPPEEGSEPHVFFDVAVNGSAFVSFQPKTAIWVTGSQEPSEAINFTLKQLNTYNRTRYELQEFLQDTCVQYLENHITTQNTKGSQTGRSYTSLVLGILMGCFIIAGVAVGIFLCTGGRRC</sequence>
<proteinExistence type="evidence at transcript level"/>
<protein>
    <recommendedName>
        <fullName>Endothelial protein C receptor</fullName>
    </recommendedName>
    <alternativeName>
        <fullName>Activated protein C receptor</fullName>
        <shortName>APC receptor</shortName>
    </alternativeName>
    <alternativeName>
        <fullName>Endothelial cell protein C receptor</fullName>
    </alternativeName>
    <cdAntigenName>CD201</cdAntigenName>
</protein>